<feature type="chain" id="PRO_0000164633" description="D-aminoacyl-tRNA deacylase">
    <location>
        <begin position="1"/>
        <end position="154"/>
    </location>
</feature>
<feature type="short sequence motif" description="Gly-cisPro motif, important for rejection of L-amino acids" evidence="1">
    <location>
        <begin position="142"/>
        <end position="143"/>
    </location>
</feature>
<sequence length="154" mass="16628">MRAVIQRAKSGSVTVDSKIVSQISHGLVVLIGVGHEDTAEDVEKVANKIIKTKLWPSVDGAQQWKQSVLDVGGEVLCVSQFTLFAKVKKGQKPDFHNAAKGPQAKELYDQVLAKIQAALPEGRTVKDGVFGAMMDVALVNDGPVTIQYDTKNDK</sequence>
<evidence type="ECO:0000250" key="1">
    <source>
        <dbReference type="UniProtKB" id="Q8IIS0"/>
    </source>
</evidence>
<evidence type="ECO:0000305" key="2"/>
<accession>Q6C7S6</accession>
<proteinExistence type="inferred from homology"/>
<reference key="1">
    <citation type="journal article" date="2004" name="Nature">
        <title>Genome evolution in yeasts.</title>
        <authorList>
            <person name="Dujon B."/>
            <person name="Sherman D."/>
            <person name="Fischer G."/>
            <person name="Durrens P."/>
            <person name="Casaregola S."/>
            <person name="Lafontaine I."/>
            <person name="de Montigny J."/>
            <person name="Marck C."/>
            <person name="Neuveglise C."/>
            <person name="Talla E."/>
            <person name="Goffard N."/>
            <person name="Frangeul L."/>
            <person name="Aigle M."/>
            <person name="Anthouard V."/>
            <person name="Babour A."/>
            <person name="Barbe V."/>
            <person name="Barnay S."/>
            <person name="Blanchin S."/>
            <person name="Beckerich J.-M."/>
            <person name="Beyne E."/>
            <person name="Bleykasten C."/>
            <person name="Boisrame A."/>
            <person name="Boyer J."/>
            <person name="Cattolico L."/>
            <person name="Confanioleri F."/>
            <person name="de Daruvar A."/>
            <person name="Despons L."/>
            <person name="Fabre E."/>
            <person name="Fairhead C."/>
            <person name="Ferry-Dumazet H."/>
            <person name="Groppi A."/>
            <person name="Hantraye F."/>
            <person name="Hennequin C."/>
            <person name="Jauniaux N."/>
            <person name="Joyet P."/>
            <person name="Kachouri R."/>
            <person name="Kerrest A."/>
            <person name="Koszul R."/>
            <person name="Lemaire M."/>
            <person name="Lesur I."/>
            <person name="Ma L."/>
            <person name="Muller H."/>
            <person name="Nicaud J.-M."/>
            <person name="Nikolski M."/>
            <person name="Oztas S."/>
            <person name="Ozier-Kalogeropoulos O."/>
            <person name="Pellenz S."/>
            <person name="Potier S."/>
            <person name="Richard G.-F."/>
            <person name="Straub M.-L."/>
            <person name="Suleau A."/>
            <person name="Swennen D."/>
            <person name="Tekaia F."/>
            <person name="Wesolowski-Louvel M."/>
            <person name="Westhof E."/>
            <person name="Wirth B."/>
            <person name="Zeniou-Meyer M."/>
            <person name="Zivanovic Y."/>
            <person name="Bolotin-Fukuhara M."/>
            <person name="Thierry A."/>
            <person name="Bouchier C."/>
            <person name="Caudron B."/>
            <person name="Scarpelli C."/>
            <person name="Gaillardin C."/>
            <person name="Weissenbach J."/>
            <person name="Wincker P."/>
            <person name="Souciet J.-L."/>
        </authorList>
    </citation>
    <scope>NUCLEOTIDE SEQUENCE [LARGE SCALE GENOMIC DNA]</scope>
    <source>
        <strain>CLIB 122 / E 150</strain>
    </source>
</reference>
<organism>
    <name type="scientific">Yarrowia lipolytica (strain CLIB 122 / E 150)</name>
    <name type="common">Yeast</name>
    <name type="synonym">Candida lipolytica</name>
    <dbReference type="NCBI Taxonomy" id="284591"/>
    <lineage>
        <taxon>Eukaryota</taxon>
        <taxon>Fungi</taxon>
        <taxon>Dikarya</taxon>
        <taxon>Ascomycota</taxon>
        <taxon>Saccharomycotina</taxon>
        <taxon>Dipodascomycetes</taxon>
        <taxon>Dipodascales</taxon>
        <taxon>Dipodascales incertae sedis</taxon>
        <taxon>Yarrowia</taxon>
    </lineage>
</organism>
<name>DTD_YARLI</name>
<gene>
    <name type="primary">DTD1</name>
    <name type="ordered locus">YALI0D25718g</name>
</gene>
<protein>
    <recommendedName>
        <fullName evidence="1">D-aminoacyl-tRNA deacylase</fullName>
        <shortName>DTD</shortName>
        <ecNumber evidence="1">3.1.1.96</ecNumber>
    </recommendedName>
    <alternativeName>
        <fullName evidence="1">Gly-tRNA(Ala) deacylase</fullName>
    </alternativeName>
</protein>
<dbReference type="EC" id="3.1.1.96" evidence="1"/>
<dbReference type="EMBL" id="CR382130">
    <property type="protein sequence ID" value="CAG81490.1"/>
    <property type="molecule type" value="Genomic_DNA"/>
</dbReference>
<dbReference type="RefSeq" id="XP_503286.1">
    <property type="nucleotide sequence ID" value="XM_503286.1"/>
</dbReference>
<dbReference type="SMR" id="Q6C7S6"/>
<dbReference type="FunCoup" id="Q6C7S6">
    <property type="interactions" value="1620"/>
</dbReference>
<dbReference type="STRING" id="284591.Q6C7S6"/>
<dbReference type="EnsemblFungi" id="CAG81490">
    <property type="protein sequence ID" value="CAG81490"/>
    <property type="gene ID" value="YALI0_D25718g"/>
</dbReference>
<dbReference type="KEGG" id="yli:2910346"/>
<dbReference type="VEuPathDB" id="FungiDB:YALI0_D25718g"/>
<dbReference type="HOGENOM" id="CLU_076901_0_4_1"/>
<dbReference type="InParanoid" id="Q6C7S6"/>
<dbReference type="OMA" id="VFGADMK"/>
<dbReference type="OrthoDB" id="104810at4891"/>
<dbReference type="Proteomes" id="UP000001300">
    <property type="component" value="Chromosome D"/>
</dbReference>
<dbReference type="GO" id="GO:0005737">
    <property type="term" value="C:cytoplasm"/>
    <property type="evidence" value="ECO:0000318"/>
    <property type="project" value="GO_Central"/>
</dbReference>
<dbReference type="GO" id="GO:0051500">
    <property type="term" value="F:D-tyrosyl-tRNA(Tyr) deacylase activity"/>
    <property type="evidence" value="ECO:0000318"/>
    <property type="project" value="GO_Central"/>
</dbReference>
<dbReference type="GO" id="GO:0000049">
    <property type="term" value="F:tRNA binding"/>
    <property type="evidence" value="ECO:0007669"/>
    <property type="project" value="UniProtKB-KW"/>
</dbReference>
<dbReference type="GO" id="GO:0006399">
    <property type="term" value="P:tRNA metabolic process"/>
    <property type="evidence" value="ECO:0000318"/>
    <property type="project" value="GO_Central"/>
</dbReference>
<dbReference type="FunFam" id="3.50.80.10:FF:000001">
    <property type="entry name" value="D-aminoacyl-tRNA deacylase"/>
    <property type="match status" value="1"/>
</dbReference>
<dbReference type="Gene3D" id="3.50.80.10">
    <property type="entry name" value="D-tyrosyl-tRNA(Tyr) deacylase"/>
    <property type="match status" value="1"/>
</dbReference>
<dbReference type="HAMAP" id="MF_00518">
    <property type="entry name" value="Deacylase_Dtd"/>
    <property type="match status" value="1"/>
</dbReference>
<dbReference type="InterPro" id="IPR003732">
    <property type="entry name" value="Daa-tRNA_deacyls_DTD"/>
</dbReference>
<dbReference type="InterPro" id="IPR023509">
    <property type="entry name" value="DTD-like_sf"/>
</dbReference>
<dbReference type="NCBIfam" id="TIGR00256">
    <property type="entry name" value="D-aminoacyl-tRNA deacylase"/>
    <property type="match status" value="1"/>
</dbReference>
<dbReference type="PANTHER" id="PTHR10472:SF5">
    <property type="entry name" value="D-AMINOACYL-TRNA DEACYLASE 1"/>
    <property type="match status" value="1"/>
</dbReference>
<dbReference type="PANTHER" id="PTHR10472">
    <property type="entry name" value="D-TYROSYL-TRNA TYR DEACYLASE"/>
    <property type="match status" value="1"/>
</dbReference>
<dbReference type="Pfam" id="PF02580">
    <property type="entry name" value="Tyr_Deacylase"/>
    <property type="match status" value="1"/>
</dbReference>
<dbReference type="SUPFAM" id="SSF69500">
    <property type="entry name" value="DTD-like"/>
    <property type="match status" value="1"/>
</dbReference>
<keyword id="KW-0963">Cytoplasm</keyword>
<keyword id="KW-0378">Hydrolase</keyword>
<keyword id="KW-1185">Reference proteome</keyword>
<keyword id="KW-0694">RNA-binding</keyword>
<keyword id="KW-0820">tRNA-binding</keyword>
<comment type="function">
    <text evidence="1">An aminoacyl-tRNA editing enzyme that deacylates mischarged D-aminoacyl-tRNAs. Also deacylates mischarged glycyl-tRNA(Ala), protecting cells against glycine mischarging by AlaRS. Acts via tRNA-based rather than protein-based catalysis; rejects L-amino acids rather than detecting D-amino acids in the active site. By recycling D-aminoacyl-tRNA to D-amino acids and free tRNA molecules, this enzyme counteracts the toxicity associated with the formation of D-aminoacyl-tRNA entities in vivo and helps enforce protein L-homochirality.</text>
</comment>
<comment type="catalytic activity">
    <reaction evidence="1">
        <text>glycyl-tRNA(Ala) + H2O = tRNA(Ala) + glycine + H(+)</text>
        <dbReference type="Rhea" id="RHEA:53744"/>
        <dbReference type="Rhea" id="RHEA-COMP:9657"/>
        <dbReference type="Rhea" id="RHEA-COMP:13640"/>
        <dbReference type="ChEBI" id="CHEBI:15377"/>
        <dbReference type="ChEBI" id="CHEBI:15378"/>
        <dbReference type="ChEBI" id="CHEBI:57305"/>
        <dbReference type="ChEBI" id="CHEBI:78442"/>
        <dbReference type="ChEBI" id="CHEBI:78522"/>
        <dbReference type="EC" id="3.1.1.96"/>
    </reaction>
</comment>
<comment type="catalytic activity">
    <reaction evidence="1">
        <text>a D-aminoacyl-tRNA + H2O = a tRNA + a D-alpha-amino acid + H(+)</text>
        <dbReference type="Rhea" id="RHEA:13953"/>
        <dbReference type="Rhea" id="RHEA-COMP:10123"/>
        <dbReference type="Rhea" id="RHEA-COMP:10124"/>
        <dbReference type="ChEBI" id="CHEBI:15377"/>
        <dbReference type="ChEBI" id="CHEBI:15378"/>
        <dbReference type="ChEBI" id="CHEBI:59871"/>
        <dbReference type="ChEBI" id="CHEBI:78442"/>
        <dbReference type="ChEBI" id="CHEBI:79333"/>
        <dbReference type="EC" id="3.1.1.96"/>
    </reaction>
</comment>
<comment type="subunit">
    <text evidence="1">Homodimer.</text>
</comment>
<comment type="subcellular location">
    <subcellularLocation>
        <location evidence="1">Cytoplasm</location>
    </subcellularLocation>
</comment>
<comment type="domain">
    <text evidence="1">A Gly-cisPro motif from one monomer fits into the active site of the other monomer to allow specific chiral rejection of L-amino acids.</text>
</comment>
<comment type="similarity">
    <text evidence="2">Belongs to the DTD family.</text>
</comment>